<evidence type="ECO:0000255" key="1">
    <source>
        <dbReference type="HAMAP-Rule" id="MF_00739"/>
    </source>
</evidence>
<comment type="catalytic activity">
    <reaction evidence="1">
        <text>urea + 2 H2O + H(+) = hydrogencarbonate + 2 NH4(+)</text>
        <dbReference type="Rhea" id="RHEA:20557"/>
        <dbReference type="ChEBI" id="CHEBI:15377"/>
        <dbReference type="ChEBI" id="CHEBI:15378"/>
        <dbReference type="ChEBI" id="CHEBI:16199"/>
        <dbReference type="ChEBI" id="CHEBI:17544"/>
        <dbReference type="ChEBI" id="CHEBI:28938"/>
        <dbReference type="EC" id="3.5.1.5"/>
    </reaction>
</comment>
<comment type="pathway">
    <text evidence="1">Nitrogen metabolism; urea degradation; CO(2) and NH(3) from urea (urease route): step 1/1.</text>
</comment>
<comment type="subunit">
    <text evidence="1">Heterotrimer of UreA (gamma), UreB (beta) and UreC (alpha) subunits. Three heterotrimers associate to form the active enzyme.</text>
</comment>
<comment type="subcellular location">
    <subcellularLocation>
        <location evidence="1">Cytoplasm</location>
    </subcellularLocation>
</comment>
<comment type="similarity">
    <text evidence="1">Belongs to the urease gamma subunit family.</text>
</comment>
<proteinExistence type="inferred from homology"/>
<keyword id="KW-0963">Cytoplasm</keyword>
<keyword id="KW-0378">Hydrolase</keyword>
<protein>
    <recommendedName>
        <fullName evidence="1">Urease subunit gamma</fullName>
        <ecNumber evidence="1">3.5.1.5</ecNumber>
    </recommendedName>
    <alternativeName>
        <fullName evidence="1">Urea amidohydrolase subunit gamma</fullName>
    </alternativeName>
</protein>
<name>URE3_ACTPL</name>
<accession>O54418</accession>
<reference key="1">
    <citation type="journal article" date="1997" name="Infect. Immun.">
        <title>Genetic and biochemical analyses of Actinobacillus pleuropneumoniae urease.</title>
        <authorList>
            <person name="Bosse J.T."/>
            <person name="Macinnes J.I."/>
        </authorList>
    </citation>
    <scope>NUCLEOTIDE SEQUENCE [GENOMIC DNA]</scope>
    <source>
        <strain>CM5 / Serotype 1</strain>
    </source>
</reference>
<sequence>MHLTSREQEKLMLFLAGELAAKRKARGVKLNYPEAIAYIASHLQEAARDGMSVAEVMQYGATLLTVDDVMGGIAEMVHEVQIEATFPDGTKLVTVHNPIR</sequence>
<gene>
    <name evidence="1" type="primary">ureA</name>
</gene>
<organism>
    <name type="scientific">Actinobacillus pleuropneumoniae</name>
    <name type="common">Haemophilus pleuropneumoniae</name>
    <dbReference type="NCBI Taxonomy" id="715"/>
    <lineage>
        <taxon>Bacteria</taxon>
        <taxon>Pseudomonadati</taxon>
        <taxon>Pseudomonadota</taxon>
        <taxon>Gammaproteobacteria</taxon>
        <taxon>Pasteurellales</taxon>
        <taxon>Pasteurellaceae</taxon>
        <taxon>Actinobacillus</taxon>
    </lineage>
</organism>
<dbReference type="EC" id="3.5.1.5" evidence="1"/>
<dbReference type="EMBL" id="U89957">
    <property type="protein sequence ID" value="AAC00058.1"/>
    <property type="molecule type" value="Genomic_DNA"/>
</dbReference>
<dbReference type="SMR" id="O54418"/>
<dbReference type="UniPathway" id="UPA00258">
    <property type="reaction ID" value="UER00370"/>
</dbReference>
<dbReference type="GO" id="GO:0005737">
    <property type="term" value="C:cytoplasm"/>
    <property type="evidence" value="ECO:0007669"/>
    <property type="project" value="UniProtKB-SubCell"/>
</dbReference>
<dbReference type="GO" id="GO:0016151">
    <property type="term" value="F:nickel cation binding"/>
    <property type="evidence" value="ECO:0007669"/>
    <property type="project" value="InterPro"/>
</dbReference>
<dbReference type="GO" id="GO:0009039">
    <property type="term" value="F:urease activity"/>
    <property type="evidence" value="ECO:0007669"/>
    <property type="project" value="UniProtKB-UniRule"/>
</dbReference>
<dbReference type="GO" id="GO:0043419">
    <property type="term" value="P:urea catabolic process"/>
    <property type="evidence" value="ECO:0007669"/>
    <property type="project" value="UniProtKB-UniRule"/>
</dbReference>
<dbReference type="CDD" id="cd00390">
    <property type="entry name" value="Urease_gamma"/>
    <property type="match status" value="1"/>
</dbReference>
<dbReference type="Gene3D" id="3.30.280.10">
    <property type="entry name" value="Urease, gamma-like subunit"/>
    <property type="match status" value="1"/>
</dbReference>
<dbReference type="HAMAP" id="MF_00739">
    <property type="entry name" value="Urease_gamma"/>
    <property type="match status" value="1"/>
</dbReference>
<dbReference type="InterPro" id="IPR012010">
    <property type="entry name" value="Urease_gamma"/>
</dbReference>
<dbReference type="InterPro" id="IPR002026">
    <property type="entry name" value="Urease_gamma/gamma-beta_su"/>
</dbReference>
<dbReference type="InterPro" id="IPR036463">
    <property type="entry name" value="Urease_gamma_sf"/>
</dbReference>
<dbReference type="InterPro" id="IPR050069">
    <property type="entry name" value="Urease_subunit"/>
</dbReference>
<dbReference type="NCBIfam" id="NF009712">
    <property type="entry name" value="PRK13241.1"/>
    <property type="match status" value="1"/>
</dbReference>
<dbReference type="NCBIfam" id="TIGR00193">
    <property type="entry name" value="urease_gam"/>
    <property type="match status" value="1"/>
</dbReference>
<dbReference type="PANTHER" id="PTHR33569">
    <property type="entry name" value="UREASE"/>
    <property type="match status" value="1"/>
</dbReference>
<dbReference type="PANTHER" id="PTHR33569:SF1">
    <property type="entry name" value="UREASE"/>
    <property type="match status" value="1"/>
</dbReference>
<dbReference type="Pfam" id="PF00547">
    <property type="entry name" value="Urease_gamma"/>
    <property type="match status" value="1"/>
</dbReference>
<dbReference type="PIRSF" id="PIRSF001223">
    <property type="entry name" value="Urease_gamma"/>
    <property type="match status" value="1"/>
</dbReference>
<dbReference type="SUPFAM" id="SSF54111">
    <property type="entry name" value="Urease, gamma-subunit"/>
    <property type="match status" value="1"/>
</dbReference>
<feature type="chain" id="PRO_0000097985" description="Urease subunit gamma">
    <location>
        <begin position="1"/>
        <end position="100"/>
    </location>
</feature>